<comment type="function">
    <text evidence="1">Catalyzes the attachment of glutamate to tRNA(Glu) in a two-step reaction: glutamate is first activated by ATP to form Glu-AMP and then transferred to the acceptor end of tRNA(Glu).</text>
</comment>
<comment type="catalytic activity">
    <reaction evidence="1">
        <text>tRNA(Glu) + L-glutamate + ATP = L-glutamyl-tRNA(Glu) + AMP + diphosphate</text>
        <dbReference type="Rhea" id="RHEA:23540"/>
        <dbReference type="Rhea" id="RHEA-COMP:9663"/>
        <dbReference type="Rhea" id="RHEA-COMP:9680"/>
        <dbReference type="ChEBI" id="CHEBI:29985"/>
        <dbReference type="ChEBI" id="CHEBI:30616"/>
        <dbReference type="ChEBI" id="CHEBI:33019"/>
        <dbReference type="ChEBI" id="CHEBI:78442"/>
        <dbReference type="ChEBI" id="CHEBI:78520"/>
        <dbReference type="ChEBI" id="CHEBI:456215"/>
        <dbReference type="EC" id="6.1.1.17"/>
    </reaction>
</comment>
<comment type="subunit">
    <text evidence="1">Monomer.</text>
</comment>
<comment type="subcellular location">
    <subcellularLocation>
        <location evidence="1">Cytoplasm</location>
    </subcellularLocation>
</comment>
<comment type="similarity">
    <text evidence="1">Belongs to the class-I aminoacyl-tRNA synthetase family. Glutamate--tRNA ligase type 1 subfamily.</text>
</comment>
<dbReference type="EC" id="6.1.1.17" evidence="1"/>
<dbReference type="EMBL" id="CP001217">
    <property type="protein sequence ID" value="ACJ07809.1"/>
    <property type="molecule type" value="Genomic_DNA"/>
</dbReference>
<dbReference type="SMR" id="B6JLN1"/>
<dbReference type="KEGG" id="hpp:HPP12_0656"/>
<dbReference type="HOGENOM" id="CLU_015768_6_0_7"/>
<dbReference type="Proteomes" id="UP000008198">
    <property type="component" value="Chromosome"/>
</dbReference>
<dbReference type="GO" id="GO:0005829">
    <property type="term" value="C:cytosol"/>
    <property type="evidence" value="ECO:0007669"/>
    <property type="project" value="TreeGrafter"/>
</dbReference>
<dbReference type="GO" id="GO:0005524">
    <property type="term" value="F:ATP binding"/>
    <property type="evidence" value="ECO:0007669"/>
    <property type="project" value="UniProtKB-UniRule"/>
</dbReference>
<dbReference type="GO" id="GO:0004818">
    <property type="term" value="F:glutamate-tRNA ligase activity"/>
    <property type="evidence" value="ECO:0007669"/>
    <property type="project" value="UniProtKB-UniRule"/>
</dbReference>
<dbReference type="GO" id="GO:0000049">
    <property type="term" value="F:tRNA binding"/>
    <property type="evidence" value="ECO:0007669"/>
    <property type="project" value="InterPro"/>
</dbReference>
<dbReference type="GO" id="GO:0006424">
    <property type="term" value="P:glutamyl-tRNA aminoacylation"/>
    <property type="evidence" value="ECO:0007669"/>
    <property type="project" value="UniProtKB-UniRule"/>
</dbReference>
<dbReference type="FunFam" id="3.40.50.620:FF:000007">
    <property type="entry name" value="Glutamate--tRNA ligase"/>
    <property type="match status" value="1"/>
</dbReference>
<dbReference type="Gene3D" id="1.10.10.350">
    <property type="match status" value="1"/>
</dbReference>
<dbReference type="Gene3D" id="3.40.50.620">
    <property type="entry name" value="HUPs"/>
    <property type="match status" value="1"/>
</dbReference>
<dbReference type="HAMAP" id="MF_00022">
    <property type="entry name" value="Glu_tRNA_synth_type1"/>
    <property type="match status" value="1"/>
</dbReference>
<dbReference type="InterPro" id="IPR045462">
    <property type="entry name" value="aa-tRNA-synth_I_cd-bd"/>
</dbReference>
<dbReference type="InterPro" id="IPR020751">
    <property type="entry name" value="aa-tRNA-synth_I_codon-bd_sub2"/>
</dbReference>
<dbReference type="InterPro" id="IPR001412">
    <property type="entry name" value="aa-tRNA-synth_I_CS"/>
</dbReference>
<dbReference type="InterPro" id="IPR008925">
    <property type="entry name" value="aa_tRNA-synth_I_cd-bd_sf"/>
</dbReference>
<dbReference type="InterPro" id="IPR004527">
    <property type="entry name" value="Glu-tRNA-ligase_bac/mito"/>
</dbReference>
<dbReference type="InterPro" id="IPR000924">
    <property type="entry name" value="Glu/Gln-tRNA-synth"/>
</dbReference>
<dbReference type="InterPro" id="IPR020058">
    <property type="entry name" value="Glu/Gln-tRNA-synth_Ib_cat-dom"/>
</dbReference>
<dbReference type="InterPro" id="IPR049940">
    <property type="entry name" value="GluQ/Sye"/>
</dbReference>
<dbReference type="InterPro" id="IPR014729">
    <property type="entry name" value="Rossmann-like_a/b/a_fold"/>
</dbReference>
<dbReference type="NCBIfam" id="TIGR00464">
    <property type="entry name" value="gltX_bact"/>
    <property type="match status" value="1"/>
</dbReference>
<dbReference type="PANTHER" id="PTHR43311">
    <property type="entry name" value="GLUTAMATE--TRNA LIGASE"/>
    <property type="match status" value="1"/>
</dbReference>
<dbReference type="PANTHER" id="PTHR43311:SF2">
    <property type="entry name" value="GLUTAMATE--TRNA LIGASE, MITOCHONDRIAL-RELATED"/>
    <property type="match status" value="1"/>
</dbReference>
<dbReference type="Pfam" id="PF19269">
    <property type="entry name" value="Anticodon_2"/>
    <property type="match status" value="1"/>
</dbReference>
<dbReference type="Pfam" id="PF00749">
    <property type="entry name" value="tRNA-synt_1c"/>
    <property type="match status" value="1"/>
</dbReference>
<dbReference type="PRINTS" id="PR00987">
    <property type="entry name" value="TRNASYNTHGLU"/>
</dbReference>
<dbReference type="SUPFAM" id="SSF48163">
    <property type="entry name" value="An anticodon-binding domain of class I aminoacyl-tRNA synthetases"/>
    <property type="match status" value="1"/>
</dbReference>
<dbReference type="SUPFAM" id="SSF52374">
    <property type="entry name" value="Nucleotidylyl transferase"/>
    <property type="match status" value="1"/>
</dbReference>
<dbReference type="PROSITE" id="PS00178">
    <property type="entry name" value="AA_TRNA_LIGASE_I"/>
    <property type="match status" value="1"/>
</dbReference>
<protein>
    <recommendedName>
        <fullName evidence="1">Glutamate--tRNA ligase 2</fullName>
        <ecNumber evidence="1">6.1.1.17</ecNumber>
    </recommendedName>
    <alternativeName>
        <fullName evidence="1">Glutamyl-tRNA synthetase 2</fullName>
        <shortName evidence="1">GluRS 2</shortName>
    </alternativeName>
</protein>
<organism>
    <name type="scientific">Helicobacter pylori (strain P12)</name>
    <dbReference type="NCBI Taxonomy" id="570508"/>
    <lineage>
        <taxon>Bacteria</taxon>
        <taxon>Pseudomonadati</taxon>
        <taxon>Campylobacterota</taxon>
        <taxon>Epsilonproteobacteria</taxon>
        <taxon>Campylobacterales</taxon>
        <taxon>Helicobacteraceae</taxon>
        <taxon>Helicobacter</taxon>
    </lineage>
</organism>
<accession>B6JLN1</accession>
<evidence type="ECO:0000255" key="1">
    <source>
        <dbReference type="HAMAP-Rule" id="MF_00022"/>
    </source>
</evidence>
<keyword id="KW-0030">Aminoacyl-tRNA synthetase</keyword>
<keyword id="KW-0067">ATP-binding</keyword>
<keyword id="KW-0963">Cytoplasm</keyword>
<keyword id="KW-0436">Ligase</keyword>
<keyword id="KW-0547">Nucleotide-binding</keyword>
<keyword id="KW-0648">Protein biosynthesis</keyword>
<proteinExistence type="inferred from homology"/>
<sequence length="439" mass="51062">MLRFAPSPTGDMHIGNLRAAIFNYIVAKQQHKPFLIRIEDTDKERNIEGKDREILEILKLMGISWDKLVYQSHNIDYHREMAEKLLKENKAFYCYASAEFLEREKEKAKNEKRPFRYLDEWATLEKDKNHAPVVRLKAPNHAVSFNDAIKKEVKFEPDELDSFVLLRQDKSPTYNFACACDDLLYEISLIIRGEDHVSNTPKQILIQQALGLNDPIVYAHLPIILDETSGKKMSKRDEASSVKWLLNQGFLPVAIGNYLITIGNKVPKEVFSLDEAIEWFSLENLSSSPAHFNLKYLKHLNHEHLKLLDDEKLLELTLIKDKNLLGLLRLFIEECGTLLELKEKISLFLEPKDIVKTYENEDFKERCLALFNALKSMDFQAYKDFESFKKEAMRLSQLKGKDFFKPLRILLTGNSHGVELPLIFPYIQSHHQEVLRLKA</sequence>
<gene>
    <name evidence="1" type="primary">gltX2</name>
    <name type="ordered locus">HPP12_0656</name>
</gene>
<feature type="chain" id="PRO_0000367686" description="Glutamate--tRNA ligase 2">
    <location>
        <begin position="1"/>
        <end position="439"/>
    </location>
</feature>
<feature type="short sequence motif" description="'HIGH' region" evidence="1">
    <location>
        <begin position="6"/>
        <end position="16"/>
    </location>
</feature>
<feature type="short sequence motif" description="'KMSKS' region" evidence="1">
    <location>
        <begin position="232"/>
        <end position="236"/>
    </location>
</feature>
<feature type="binding site" evidence="1">
    <location>
        <position position="235"/>
    </location>
    <ligand>
        <name>ATP</name>
        <dbReference type="ChEBI" id="CHEBI:30616"/>
    </ligand>
</feature>
<name>SYE2_HELP2</name>
<reference key="1">
    <citation type="submission" date="2008-10" db="EMBL/GenBank/DDBJ databases">
        <title>The complete genome sequence of Helicobacter pylori strain P12.</title>
        <authorList>
            <person name="Fischer W."/>
            <person name="Windhager L."/>
            <person name="Karnholz A."/>
            <person name="Zeiller M."/>
            <person name="Zimmer R."/>
            <person name="Haas R."/>
        </authorList>
    </citation>
    <scope>NUCLEOTIDE SEQUENCE [LARGE SCALE GENOMIC DNA]</scope>
    <source>
        <strain>P12</strain>
    </source>
</reference>